<sequence>MSAALLEISGCYRTFQAGEQQLTVLKDVNLTIERGEMVAIVGASGSGKSTLMNILGCLDKPSKGAYFINGQDTSTMDADELAQLRREHFGFIFQRYHLLSDLTAIGNVEVPAVYAGKERSARKDRAEHLLTRLGLGDRLDHKPNQLSGGQQQRVSVARALMNGGDVILADEPTGALDSHSGEEMMQLLQELHSDGHTIIIVTHDMNVAQYADRIIEIKDGIIISDERKTKAPKHVDTAVTKINNRIRVASWDRYVEAFKMALLAMSTHRLRTFLTMLGIIIGIASVVSVVALGEGSQREILNSISSMGTNTIDIRPGFGFGDRRSGKVKTLIVKDADALKHLPYVDSVTPTVDSSMTLRYGNKAVTTVVNGVGPEFFRVRGYELAMGQFWDEDSVSSLAQDAVIDDKVRKELFPRSSPIGEVIFIGNLPVRIIGVTEPKDSVFGKSDSLNVWLPYTTLSGRIVGKNYLNGITVRLNESVPSNAAEQGIITLLKMRHGIEDFFTINTDAIRQNIEKTTATMTLLISAIAVISLIVGGIGVMNIMLVSVTERTREIGVRMAVGARQSDILRQFLIEAVLVCLCGGTLGIALAYLIGVVFAQTGGSFQMIYSTTSIVAAFACSTLIGVLFGFLPARNAARLDPVDALARE</sequence>
<feature type="chain" id="PRO_0000280175" description="Macrolide export ATP-binding/permease protein MacB">
    <location>
        <begin position="1"/>
        <end position="647"/>
    </location>
</feature>
<feature type="transmembrane region" description="Helical" evidence="1">
    <location>
        <begin position="273"/>
        <end position="293"/>
    </location>
</feature>
<feature type="transmembrane region" description="Helical" evidence="1">
    <location>
        <begin position="522"/>
        <end position="542"/>
    </location>
</feature>
<feature type="transmembrane region" description="Helical" evidence="1">
    <location>
        <begin position="577"/>
        <end position="597"/>
    </location>
</feature>
<feature type="transmembrane region" description="Helical" evidence="1">
    <location>
        <begin position="612"/>
        <end position="632"/>
    </location>
</feature>
<feature type="domain" description="ABC transporter" evidence="1">
    <location>
        <begin position="6"/>
        <end position="244"/>
    </location>
</feature>
<feature type="binding site" evidence="1">
    <location>
        <begin position="42"/>
        <end position="49"/>
    </location>
    <ligand>
        <name>ATP</name>
        <dbReference type="ChEBI" id="CHEBI:30616"/>
    </ligand>
</feature>
<dbReference type="EC" id="7.6.2.-" evidence="1"/>
<dbReference type="EMBL" id="CP000503">
    <property type="protein sequence ID" value="ABM23624.1"/>
    <property type="molecule type" value="Genomic_DNA"/>
</dbReference>
<dbReference type="RefSeq" id="WP_011788152.1">
    <property type="nucleotide sequence ID" value="NC_008750.1"/>
</dbReference>
<dbReference type="SMR" id="A1RG29"/>
<dbReference type="KEGG" id="shw:Sputw3181_0773"/>
<dbReference type="HOGENOM" id="CLU_000604_78_1_6"/>
<dbReference type="Proteomes" id="UP000002597">
    <property type="component" value="Chromosome"/>
</dbReference>
<dbReference type="GO" id="GO:0005886">
    <property type="term" value="C:plasma membrane"/>
    <property type="evidence" value="ECO:0007669"/>
    <property type="project" value="UniProtKB-SubCell"/>
</dbReference>
<dbReference type="GO" id="GO:0005524">
    <property type="term" value="F:ATP binding"/>
    <property type="evidence" value="ECO:0007669"/>
    <property type="project" value="UniProtKB-KW"/>
</dbReference>
<dbReference type="GO" id="GO:0016887">
    <property type="term" value="F:ATP hydrolysis activity"/>
    <property type="evidence" value="ECO:0007669"/>
    <property type="project" value="InterPro"/>
</dbReference>
<dbReference type="GO" id="GO:0022857">
    <property type="term" value="F:transmembrane transporter activity"/>
    <property type="evidence" value="ECO:0007669"/>
    <property type="project" value="TreeGrafter"/>
</dbReference>
<dbReference type="GO" id="GO:0046677">
    <property type="term" value="P:response to antibiotic"/>
    <property type="evidence" value="ECO:0007669"/>
    <property type="project" value="UniProtKB-KW"/>
</dbReference>
<dbReference type="CDD" id="cd03255">
    <property type="entry name" value="ABC_MJ0796_LolCDE_FtsE"/>
    <property type="match status" value="1"/>
</dbReference>
<dbReference type="FunFam" id="3.40.50.300:FF:000032">
    <property type="entry name" value="Export ABC transporter ATP-binding protein"/>
    <property type="match status" value="1"/>
</dbReference>
<dbReference type="Gene3D" id="3.40.50.300">
    <property type="entry name" value="P-loop containing nucleotide triphosphate hydrolases"/>
    <property type="match status" value="1"/>
</dbReference>
<dbReference type="InterPro" id="IPR003593">
    <property type="entry name" value="AAA+_ATPase"/>
</dbReference>
<dbReference type="InterPro" id="IPR003838">
    <property type="entry name" value="ABC3_permease_C"/>
</dbReference>
<dbReference type="InterPro" id="IPR003439">
    <property type="entry name" value="ABC_transporter-like_ATP-bd"/>
</dbReference>
<dbReference type="InterPro" id="IPR017871">
    <property type="entry name" value="ABC_transporter-like_CS"/>
</dbReference>
<dbReference type="InterPro" id="IPR017911">
    <property type="entry name" value="MacB-like_ATP-bd"/>
</dbReference>
<dbReference type="InterPro" id="IPR025857">
    <property type="entry name" value="MacB_PCD"/>
</dbReference>
<dbReference type="InterPro" id="IPR050250">
    <property type="entry name" value="Macrolide_Exporter_MacB"/>
</dbReference>
<dbReference type="InterPro" id="IPR027417">
    <property type="entry name" value="P-loop_NTPase"/>
</dbReference>
<dbReference type="PANTHER" id="PTHR30572:SF14">
    <property type="entry name" value="MACROLIDE EXPORT ATP-BINDING_PERMEASE PROTEIN MACB"/>
    <property type="match status" value="1"/>
</dbReference>
<dbReference type="PANTHER" id="PTHR30572">
    <property type="entry name" value="MEMBRANE COMPONENT OF TRANSPORTER-RELATED"/>
    <property type="match status" value="1"/>
</dbReference>
<dbReference type="Pfam" id="PF00005">
    <property type="entry name" value="ABC_tran"/>
    <property type="match status" value="1"/>
</dbReference>
<dbReference type="Pfam" id="PF02687">
    <property type="entry name" value="FtsX"/>
    <property type="match status" value="1"/>
</dbReference>
<dbReference type="Pfam" id="PF12704">
    <property type="entry name" value="MacB_PCD"/>
    <property type="match status" value="1"/>
</dbReference>
<dbReference type="SMART" id="SM00382">
    <property type="entry name" value="AAA"/>
    <property type="match status" value="1"/>
</dbReference>
<dbReference type="SUPFAM" id="SSF52540">
    <property type="entry name" value="P-loop containing nucleoside triphosphate hydrolases"/>
    <property type="match status" value="1"/>
</dbReference>
<dbReference type="PROSITE" id="PS00211">
    <property type="entry name" value="ABC_TRANSPORTER_1"/>
    <property type="match status" value="1"/>
</dbReference>
<dbReference type="PROSITE" id="PS50893">
    <property type="entry name" value="ABC_TRANSPORTER_2"/>
    <property type="match status" value="1"/>
</dbReference>
<dbReference type="PROSITE" id="PS51267">
    <property type="entry name" value="MACB"/>
    <property type="match status" value="1"/>
</dbReference>
<evidence type="ECO:0000255" key="1">
    <source>
        <dbReference type="HAMAP-Rule" id="MF_01720"/>
    </source>
</evidence>
<gene>
    <name evidence="1" type="primary">macB</name>
    <name type="ordered locus">Sputw3181_0773</name>
</gene>
<name>MACB_SHESW</name>
<comment type="function">
    <text evidence="1">Part of the tripartite efflux system MacAB-TolC. MacB is a non-canonical ABC transporter that contains transmembrane domains (TMD), which form a pore in the inner membrane, and an ATP-binding domain (NBD), which is responsible for energy generation. Confers resistance against macrolides.</text>
</comment>
<comment type="subunit">
    <text evidence="1">Homodimer. Part of the tripartite efflux system MacAB-TolC, which is composed of an inner membrane transporter, MacB, a periplasmic membrane fusion protein, MacA, and an outer membrane component, TolC. The complex forms a large protein conduit and can translocate molecules across both the inner and outer membranes. Interacts with MacA.</text>
</comment>
<comment type="subcellular location">
    <subcellularLocation>
        <location evidence="1">Cell inner membrane</location>
        <topology evidence="1">Multi-pass membrane protein</topology>
    </subcellularLocation>
</comment>
<comment type="similarity">
    <text evidence="1">Belongs to the ABC transporter superfamily. Macrolide exporter (TC 3.A.1.122) family.</text>
</comment>
<reference key="1">
    <citation type="submission" date="2006-12" db="EMBL/GenBank/DDBJ databases">
        <title>Complete sequence of Shewanella sp. W3-18-1.</title>
        <authorList>
            <consortium name="US DOE Joint Genome Institute"/>
            <person name="Copeland A."/>
            <person name="Lucas S."/>
            <person name="Lapidus A."/>
            <person name="Barry K."/>
            <person name="Detter J.C."/>
            <person name="Glavina del Rio T."/>
            <person name="Hammon N."/>
            <person name="Israni S."/>
            <person name="Dalin E."/>
            <person name="Tice H."/>
            <person name="Pitluck S."/>
            <person name="Chain P."/>
            <person name="Malfatti S."/>
            <person name="Shin M."/>
            <person name="Vergez L."/>
            <person name="Schmutz J."/>
            <person name="Larimer F."/>
            <person name="Land M."/>
            <person name="Hauser L."/>
            <person name="Kyrpides N."/>
            <person name="Lykidis A."/>
            <person name="Tiedje J."/>
            <person name="Richardson P."/>
        </authorList>
    </citation>
    <scope>NUCLEOTIDE SEQUENCE [LARGE SCALE GENOMIC DNA]</scope>
    <source>
        <strain>W3-18-1</strain>
    </source>
</reference>
<organism>
    <name type="scientific">Shewanella sp. (strain W3-18-1)</name>
    <dbReference type="NCBI Taxonomy" id="351745"/>
    <lineage>
        <taxon>Bacteria</taxon>
        <taxon>Pseudomonadati</taxon>
        <taxon>Pseudomonadota</taxon>
        <taxon>Gammaproteobacteria</taxon>
        <taxon>Alteromonadales</taxon>
        <taxon>Shewanellaceae</taxon>
        <taxon>Shewanella</taxon>
    </lineage>
</organism>
<protein>
    <recommendedName>
        <fullName evidence="1">Macrolide export ATP-binding/permease protein MacB</fullName>
        <ecNumber evidence="1">7.6.2.-</ecNumber>
    </recommendedName>
</protein>
<proteinExistence type="inferred from homology"/>
<accession>A1RG29</accession>
<keyword id="KW-0046">Antibiotic resistance</keyword>
<keyword id="KW-0067">ATP-binding</keyword>
<keyword id="KW-0997">Cell inner membrane</keyword>
<keyword id="KW-1003">Cell membrane</keyword>
<keyword id="KW-0472">Membrane</keyword>
<keyword id="KW-0547">Nucleotide-binding</keyword>
<keyword id="KW-1278">Translocase</keyword>
<keyword id="KW-0812">Transmembrane</keyword>
<keyword id="KW-1133">Transmembrane helix</keyword>
<keyword id="KW-0813">Transport</keyword>